<reference key="1">
    <citation type="journal article" date="2005" name="Genome Res.">
        <title>The Chlamydophila abortus genome sequence reveals an array of variable proteins that contribute to interspecies variation.</title>
        <authorList>
            <person name="Thomson N.R."/>
            <person name="Yeats C."/>
            <person name="Bell K."/>
            <person name="Holden M.T.G."/>
            <person name="Bentley S.D."/>
            <person name="Livingstone M."/>
            <person name="Cerdeno-Tarraga A.-M."/>
            <person name="Harris B."/>
            <person name="Doggett J."/>
            <person name="Ormond D."/>
            <person name="Mungall K."/>
            <person name="Clarke K."/>
            <person name="Feltwell T."/>
            <person name="Hance Z."/>
            <person name="Sanders M."/>
            <person name="Quail M.A."/>
            <person name="Price C."/>
            <person name="Barrell B.G."/>
            <person name="Parkhill J."/>
            <person name="Longbottom D."/>
        </authorList>
    </citation>
    <scope>NUCLEOTIDE SEQUENCE [LARGE SCALE GENOMIC DNA]</scope>
    <source>
        <strain>DSM 27085 / S26/3</strain>
    </source>
</reference>
<proteinExistence type="inferred from homology"/>
<accession>Q5L574</accession>
<keyword id="KW-0687">Ribonucleoprotein</keyword>
<keyword id="KW-0689">Ribosomal protein</keyword>
<gene>
    <name evidence="1" type="primary">rpmF</name>
    <name type="ordered locus">CAB778</name>
</gene>
<feature type="chain" id="PRO_0000225715" description="Large ribosomal subunit protein bL32">
    <location>
        <begin position="1"/>
        <end position="60"/>
    </location>
</feature>
<feature type="region of interest" description="Disordered" evidence="2">
    <location>
        <begin position="1"/>
        <end position="23"/>
    </location>
</feature>
<organism>
    <name type="scientific">Chlamydia abortus (strain DSM 27085 / S26/3)</name>
    <name type="common">Chlamydophila abortus</name>
    <dbReference type="NCBI Taxonomy" id="218497"/>
    <lineage>
        <taxon>Bacteria</taxon>
        <taxon>Pseudomonadati</taxon>
        <taxon>Chlamydiota</taxon>
        <taxon>Chlamydiia</taxon>
        <taxon>Chlamydiales</taxon>
        <taxon>Chlamydiaceae</taxon>
        <taxon>Chlamydia/Chlamydophila group</taxon>
        <taxon>Chlamydia</taxon>
    </lineage>
</organism>
<protein>
    <recommendedName>
        <fullName evidence="1">Large ribosomal subunit protein bL32</fullName>
    </recommendedName>
    <alternativeName>
        <fullName evidence="3">50S ribosomal protein L32</fullName>
    </alternativeName>
</protein>
<name>RL32_CHLAB</name>
<evidence type="ECO:0000255" key="1">
    <source>
        <dbReference type="HAMAP-Rule" id="MF_00340"/>
    </source>
</evidence>
<evidence type="ECO:0000256" key="2">
    <source>
        <dbReference type="SAM" id="MobiDB-lite"/>
    </source>
</evidence>
<evidence type="ECO:0000305" key="3"/>
<comment type="similarity">
    <text evidence="1">Belongs to the bacterial ribosomal protein bL32 family.</text>
</comment>
<dbReference type="EMBL" id="CR848038">
    <property type="protein sequence ID" value="CAH64220.1"/>
    <property type="molecule type" value="Genomic_DNA"/>
</dbReference>
<dbReference type="RefSeq" id="WP_006344383.1">
    <property type="nucleotide sequence ID" value="NC_004552.2"/>
</dbReference>
<dbReference type="SMR" id="Q5L574"/>
<dbReference type="GeneID" id="93024329"/>
<dbReference type="KEGG" id="cab:CAB778"/>
<dbReference type="eggNOG" id="COG0333">
    <property type="taxonomic scope" value="Bacteria"/>
</dbReference>
<dbReference type="HOGENOM" id="CLU_129084_1_3_0"/>
<dbReference type="OrthoDB" id="9812874at2"/>
<dbReference type="Proteomes" id="UP000001012">
    <property type="component" value="Chromosome"/>
</dbReference>
<dbReference type="GO" id="GO:0015934">
    <property type="term" value="C:large ribosomal subunit"/>
    <property type="evidence" value="ECO:0007669"/>
    <property type="project" value="InterPro"/>
</dbReference>
<dbReference type="GO" id="GO:0003735">
    <property type="term" value="F:structural constituent of ribosome"/>
    <property type="evidence" value="ECO:0007669"/>
    <property type="project" value="InterPro"/>
</dbReference>
<dbReference type="GO" id="GO:0006412">
    <property type="term" value="P:translation"/>
    <property type="evidence" value="ECO:0007669"/>
    <property type="project" value="UniProtKB-UniRule"/>
</dbReference>
<dbReference type="HAMAP" id="MF_00340">
    <property type="entry name" value="Ribosomal_bL32"/>
    <property type="match status" value="1"/>
</dbReference>
<dbReference type="InterPro" id="IPR002677">
    <property type="entry name" value="Ribosomal_bL32"/>
</dbReference>
<dbReference type="InterPro" id="IPR044957">
    <property type="entry name" value="Ribosomal_bL32_bact"/>
</dbReference>
<dbReference type="InterPro" id="IPR011332">
    <property type="entry name" value="Ribosomal_zn-bd"/>
</dbReference>
<dbReference type="NCBIfam" id="TIGR01031">
    <property type="entry name" value="rpmF_bact"/>
    <property type="match status" value="1"/>
</dbReference>
<dbReference type="PANTHER" id="PTHR35534">
    <property type="entry name" value="50S RIBOSOMAL PROTEIN L32"/>
    <property type="match status" value="1"/>
</dbReference>
<dbReference type="PANTHER" id="PTHR35534:SF1">
    <property type="entry name" value="LARGE RIBOSOMAL SUBUNIT PROTEIN BL32"/>
    <property type="match status" value="1"/>
</dbReference>
<dbReference type="Pfam" id="PF01783">
    <property type="entry name" value="Ribosomal_L32p"/>
    <property type="match status" value="1"/>
</dbReference>
<dbReference type="SUPFAM" id="SSF57829">
    <property type="entry name" value="Zn-binding ribosomal proteins"/>
    <property type="match status" value="1"/>
</dbReference>
<sequence length="60" mass="6776">MAVPRNRHSNARKNIRRSHHAKQARHAAVCNNCKQAFIPHTVCTSCGFYNGKAVMTVEKK</sequence>